<comment type="function">
    <text evidence="3 5">Probable transcription activator that may act as growth regulators in response to water deficit.</text>
</comment>
<comment type="subunit">
    <text evidence="7">Interacts with TFIIB1.</text>
</comment>
<comment type="subcellular location">
    <subcellularLocation>
        <location evidence="1 4">Nucleus</location>
    </subcellularLocation>
</comment>
<comment type="tissue specificity">
    <text evidence="6 8">Widely expressed.</text>
</comment>
<comment type="induction">
    <text evidence="4 6 8">By water deficit, by abscisic acid (ABA), by cold and salt stress.</text>
</comment>
<comment type="similarity">
    <text evidence="9">Belongs to the HD-ZIP homeobox family. Class I subfamily.</text>
</comment>
<accession>Q9M276</accession>
<accession>O64893</accession>
<proteinExistence type="evidence at protein level"/>
<keyword id="KW-0010">Activator</keyword>
<keyword id="KW-0217">Developmental protein</keyword>
<keyword id="KW-0238">DNA-binding</keyword>
<keyword id="KW-0371">Homeobox</keyword>
<keyword id="KW-0539">Nucleus</keyword>
<keyword id="KW-1185">Reference proteome</keyword>
<keyword id="KW-0346">Stress response</keyword>
<keyword id="KW-0804">Transcription</keyword>
<keyword id="KW-0805">Transcription regulation</keyword>
<reference key="1">
    <citation type="journal article" date="1998" name="Plant Mol. Biol.">
        <title>A new homeodomain-leucine zipper gene from Arabidopsis thaliana induced by water stress and abscisic acid treatment.</title>
        <authorList>
            <person name="Lee Y.-H."/>
            <person name="Chun J.-Y."/>
        </authorList>
    </citation>
    <scope>NUCLEOTIDE SEQUENCE [MRNA]</scope>
    <scope>TISSUE SPECIFICITY</scope>
    <scope>INDUCTION</scope>
</reference>
<reference key="2">
    <citation type="journal article" date="2000" name="Nature">
        <title>Sequence and analysis of chromosome 3 of the plant Arabidopsis thaliana.</title>
        <authorList>
            <person name="Salanoubat M."/>
            <person name="Lemcke K."/>
            <person name="Rieger M."/>
            <person name="Ansorge W."/>
            <person name="Unseld M."/>
            <person name="Fartmann B."/>
            <person name="Valle G."/>
            <person name="Bloecker H."/>
            <person name="Perez-Alonso M."/>
            <person name="Obermaier B."/>
            <person name="Delseny M."/>
            <person name="Boutry M."/>
            <person name="Grivell L.A."/>
            <person name="Mache R."/>
            <person name="Puigdomenech P."/>
            <person name="De Simone V."/>
            <person name="Choisne N."/>
            <person name="Artiguenave F."/>
            <person name="Robert C."/>
            <person name="Brottier P."/>
            <person name="Wincker P."/>
            <person name="Cattolico L."/>
            <person name="Weissenbach J."/>
            <person name="Saurin W."/>
            <person name="Quetier F."/>
            <person name="Schaefer M."/>
            <person name="Mueller-Auer S."/>
            <person name="Gabel C."/>
            <person name="Fuchs M."/>
            <person name="Benes V."/>
            <person name="Wurmbach E."/>
            <person name="Drzonek H."/>
            <person name="Erfle H."/>
            <person name="Jordan N."/>
            <person name="Bangert S."/>
            <person name="Wiedelmann R."/>
            <person name="Kranz H."/>
            <person name="Voss H."/>
            <person name="Holland R."/>
            <person name="Brandt P."/>
            <person name="Nyakatura G."/>
            <person name="Vezzi A."/>
            <person name="D'Angelo M."/>
            <person name="Pallavicini A."/>
            <person name="Toppo S."/>
            <person name="Simionati B."/>
            <person name="Conrad A."/>
            <person name="Hornischer K."/>
            <person name="Kauer G."/>
            <person name="Loehnert T.-H."/>
            <person name="Nordsiek G."/>
            <person name="Reichelt J."/>
            <person name="Scharfe M."/>
            <person name="Schoen O."/>
            <person name="Bargues M."/>
            <person name="Terol J."/>
            <person name="Climent J."/>
            <person name="Navarro P."/>
            <person name="Collado C."/>
            <person name="Perez-Perez A."/>
            <person name="Ottenwaelder B."/>
            <person name="Duchemin D."/>
            <person name="Cooke R."/>
            <person name="Laudie M."/>
            <person name="Berger-Llauro C."/>
            <person name="Purnelle B."/>
            <person name="Masuy D."/>
            <person name="de Haan M."/>
            <person name="Maarse A.C."/>
            <person name="Alcaraz J.-P."/>
            <person name="Cottet A."/>
            <person name="Casacuberta E."/>
            <person name="Monfort A."/>
            <person name="Argiriou A."/>
            <person name="Flores M."/>
            <person name="Liguori R."/>
            <person name="Vitale D."/>
            <person name="Mannhaupt G."/>
            <person name="Haase D."/>
            <person name="Schoof H."/>
            <person name="Rudd S."/>
            <person name="Zaccaria P."/>
            <person name="Mewes H.-W."/>
            <person name="Mayer K.F.X."/>
            <person name="Kaul S."/>
            <person name="Town C.D."/>
            <person name="Koo H.L."/>
            <person name="Tallon L.J."/>
            <person name="Jenkins J."/>
            <person name="Rooney T."/>
            <person name="Rizzo M."/>
            <person name="Walts A."/>
            <person name="Utterback T."/>
            <person name="Fujii C.Y."/>
            <person name="Shea T.P."/>
            <person name="Creasy T.H."/>
            <person name="Haas B."/>
            <person name="Maiti R."/>
            <person name="Wu D."/>
            <person name="Peterson J."/>
            <person name="Van Aken S."/>
            <person name="Pai G."/>
            <person name="Militscher J."/>
            <person name="Sellers P."/>
            <person name="Gill J.E."/>
            <person name="Feldblyum T.V."/>
            <person name="Preuss D."/>
            <person name="Lin X."/>
            <person name="Nierman W.C."/>
            <person name="Salzberg S.L."/>
            <person name="White O."/>
            <person name="Venter J.C."/>
            <person name="Fraser C.M."/>
            <person name="Kaneko T."/>
            <person name="Nakamura Y."/>
            <person name="Sato S."/>
            <person name="Kato T."/>
            <person name="Asamizu E."/>
            <person name="Sasamoto S."/>
            <person name="Kimura T."/>
            <person name="Idesawa K."/>
            <person name="Kawashima K."/>
            <person name="Kishida Y."/>
            <person name="Kiyokawa C."/>
            <person name="Kohara M."/>
            <person name="Matsumoto M."/>
            <person name="Matsuno A."/>
            <person name="Muraki A."/>
            <person name="Nakayama S."/>
            <person name="Nakazaki N."/>
            <person name="Shinpo S."/>
            <person name="Takeuchi C."/>
            <person name="Wada T."/>
            <person name="Watanabe A."/>
            <person name="Yamada M."/>
            <person name="Yasuda M."/>
            <person name="Tabata S."/>
        </authorList>
    </citation>
    <scope>NUCLEOTIDE SEQUENCE [LARGE SCALE GENOMIC DNA]</scope>
    <source>
        <strain>cv. Columbia</strain>
    </source>
</reference>
<reference key="3">
    <citation type="journal article" date="2017" name="Plant J.">
        <title>Araport11: a complete reannotation of the Arabidopsis thaliana reference genome.</title>
        <authorList>
            <person name="Cheng C.Y."/>
            <person name="Krishnakumar V."/>
            <person name="Chan A.P."/>
            <person name="Thibaud-Nissen F."/>
            <person name="Schobel S."/>
            <person name="Town C.D."/>
        </authorList>
    </citation>
    <scope>GENOME REANNOTATION</scope>
    <source>
        <strain>cv. Columbia</strain>
    </source>
</reference>
<reference key="4">
    <citation type="journal article" date="2003" name="Science">
        <title>Empirical analysis of transcriptional activity in the Arabidopsis genome.</title>
        <authorList>
            <person name="Yamada K."/>
            <person name="Lim J."/>
            <person name="Dale J.M."/>
            <person name="Chen H."/>
            <person name="Shinn P."/>
            <person name="Palm C.J."/>
            <person name="Southwick A.M."/>
            <person name="Wu H.C."/>
            <person name="Kim C.J."/>
            <person name="Nguyen M."/>
            <person name="Pham P.K."/>
            <person name="Cheuk R.F."/>
            <person name="Karlin-Newmann G."/>
            <person name="Liu S.X."/>
            <person name="Lam B."/>
            <person name="Sakano H."/>
            <person name="Wu T."/>
            <person name="Yu G."/>
            <person name="Miranda M."/>
            <person name="Quach H.L."/>
            <person name="Tripp M."/>
            <person name="Chang C.H."/>
            <person name="Lee J.M."/>
            <person name="Toriumi M.J."/>
            <person name="Chan M.M."/>
            <person name="Tang C.C."/>
            <person name="Onodera C.S."/>
            <person name="Deng J.M."/>
            <person name="Akiyama K."/>
            <person name="Ansari Y."/>
            <person name="Arakawa T."/>
            <person name="Banh J."/>
            <person name="Banno F."/>
            <person name="Bowser L."/>
            <person name="Brooks S.Y."/>
            <person name="Carninci P."/>
            <person name="Chao Q."/>
            <person name="Choy N."/>
            <person name="Enju A."/>
            <person name="Goldsmith A.D."/>
            <person name="Gurjal M."/>
            <person name="Hansen N.F."/>
            <person name="Hayashizaki Y."/>
            <person name="Johnson-Hopson C."/>
            <person name="Hsuan V.W."/>
            <person name="Iida K."/>
            <person name="Karnes M."/>
            <person name="Khan S."/>
            <person name="Koesema E."/>
            <person name="Ishida J."/>
            <person name="Jiang P.X."/>
            <person name="Jones T."/>
            <person name="Kawai J."/>
            <person name="Kamiya A."/>
            <person name="Meyers C."/>
            <person name="Nakajima M."/>
            <person name="Narusaka M."/>
            <person name="Seki M."/>
            <person name="Sakurai T."/>
            <person name="Satou M."/>
            <person name="Tamse R."/>
            <person name="Vaysberg M."/>
            <person name="Wallender E.K."/>
            <person name="Wong C."/>
            <person name="Yamamura Y."/>
            <person name="Yuan S."/>
            <person name="Shinozaki K."/>
            <person name="Davis R.W."/>
            <person name="Theologis A."/>
            <person name="Ecker J.R."/>
        </authorList>
    </citation>
    <scope>NUCLEOTIDE SEQUENCE [LARGE SCALE MRNA]</scope>
    <source>
        <strain>cv. Columbia</strain>
    </source>
</reference>
<reference key="5">
    <citation type="submission" date="2002-03" db="EMBL/GenBank/DDBJ databases">
        <title>Full-length cDNA from Arabidopsis thaliana.</title>
        <authorList>
            <person name="Brover V.V."/>
            <person name="Troukhan M.E."/>
            <person name="Alexandrov N.A."/>
            <person name="Lu Y.-P."/>
            <person name="Flavell R.B."/>
            <person name="Feldmann K.A."/>
        </authorList>
    </citation>
    <scope>NUCLEOTIDE SEQUENCE [LARGE SCALE MRNA]</scope>
</reference>
<reference key="6">
    <citation type="journal article" date="2001" name="Biochem. Biophys. Res. Commun.">
        <title>Structure and expression of the Arabidopsis thaliana homeobox gene Athb-12.</title>
        <authorList>
            <person name="Lee Y.-H."/>
            <person name="Oh H.-S."/>
            <person name="Cheon C.-I."/>
            <person name="Hwang I.-T."/>
            <person name="Kim Y.-J."/>
            <person name="Chun J.-Y."/>
        </authorList>
    </citation>
    <scope>FUNCTION</scope>
</reference>
<reference key="7">
    <citation type="journal article" date="2004" name="Biochem. Biophys. Res. Commun.">
        <title>Athb-12, a homeobox-leucine zipper domain protein from Arabidopsis thaliana, increases salt tolerance in yeast by regulating sodium exclusion.</title>
        <authorList>
            <person name="Shin D."/>
            <person name="Koo Y.D."/>
            <person name="Lee J."/>
            <person name="Lee H.-J."/>
            <person name="Baek D."/>
            <person name="Lee S."/>
            <person name="Cheon C.-I."/>
            <person name="Kwak S.-S."/>
            <person name="Lee S.Y."/>
            <person name="Yun D.-J."/>
        </authorList>
    </citation>
    <scope>SUBCELLULAR LOCATION</scope>
    <scope>INDUCTION</scope>
</reference>
<reference key="8">
    <citation type="journal article" date="2004" name="Plant Mol. Biol.">
        <title>The homeobox genes ATHB12 and ATHB7 encode potential regulators of growth in response to water deficit in Arabidopsis.</title>
        <authorList>
            <person name="Olsson A.S.B."/>
            <person name="Engstroem P."/>
            <person name="Seoderman E."/>
        </authorList>
    </citation>
    <scope>FUNCTION</scope>
</reference>
<reference key="9">
    <citation type="journal article" date="2005" name="Plant Physiol.">
        <title>Homeodomain leucine zipper class I genes in Arabidopsis. Expression patterns and phylogenetic relationships.</title>
        <authorList>
            <person name="Henriksson E."/>
            <person name="Olsson A.S.B."/>
            <person name="Johannesson H."/>
            <person name="Johansson H."/>
            <person name="Hanson J."/>
            <person name="Engstroem P."/>
            <person name="Soederman E."/>
        </authorList>
    </citation>
    <scope>GENE FAMILY</scope>
    <scope>TISSUE SPECIFICITY</scope>
    <scope>INDUCTION</scope>
</reference>
<reference key="10">
    <citation type="journal article" date="2014" name="Plant Cell Rep.">
        <title>Plant homeodomain-leucine zipper I transcription factors exhibit different functional AHA motifs that selectively interact with TBP or/and TFIIB.</title>
        <authorList>
            <person name="Capella M."/>
            <person name="Re D.A."/>
            <person name="Arce A.L."/>
            <person name="Chan R.L."/>
        </authorList>
    </citation>
    <scope>INTERACTION WITH TFIIB1</scope>
</reference>
<sequence length="235" mass="27485">MEEGDFFNCCFSEISSGMTMNKKKMKKSNNQKRFSEEQIKSLELIFESETRLEPRKKVQVARELGLQPRQVAIWFQNKRARWKTKQLEKEYNTLRANYNNLASQFEIMKKEKQSLVSELQRLNEEMQRPKEEKHHECCGDQGLALSSSTESHNGKSEPEGRLDQGSVLCNDGDYNNNIKTEYFGFEEETDHELMNIVEKADDSCLTSSENWGGFNSDSLLDQSSSNYPNWWEFWS</sequence>
<organism>
    <name type="scientific">Arabidopsis thaliana</name>
    <name type="common">Mouse-ear cress</name>
    <dbReference type="NCBI Taxonomy" id="3702"/>
    <lineage>
        <taxon>Eukaryota</taxon>
        <taxon>Viridiplantae</taxon>
        <taxon>Streptophyta</taxon>
        <taxon>Embryophyta</taxon>
        <taxon>Tracheophyta</taxon>
        <taxon>Spermatophyta</taxon>
        <taxon>Magnoliopsida</taxon>
        <taxon>eudicotyledons</taxon>
        <taxon>Gunneridae</taxon>
        <taxon>Pentapetalae</taxon>
        <taxon>rosids</taxon>
        <taxon>malvids</taxon>
        <taxon>Brassicales</taxon>
        <taxon>Brassicaceae</taxon>
        <taxon>Camelineae</taxon>
        <taxon>Arabidopsis</taxon>
    </lineage>
</organism>
<name>ATB12_ARATH</name>
<protein>
    <recommendedName>
        <fullName>Homeobox-leucine zipper protein ATHB-12</fullName>
    </recommendedName>
    <alternativeName>
        <fullName>HD-ZIP protein ATHB-12</fullName>
    </alternativeName>
    <alternativeName>
        <fullName>Homeodomain transcription factor ATHB-12</fullName>
    </alternativeName>
</protein>
<dbReference type="EMBL" id="AF001949">
    <property type="protein sequence ID" value="AAC39462.1"/>
    <property type="molecule type" value="mRNA"/>
</dbReference>
<dbReference type="EMBL" id="AL138642">
    <property type="protein sequence ID" value="CAB71896.1"/>
    <property type="molecule type" value="Genomic_DNA"/>
</dbReference>
<dbReference type="EMBL" id="CP002686">
    <property type="protein sequence ID" value="AEE80275.1"/>
    <property type="molecule type" value="Genomic_DNA"/>
</dbReference>
<dbReference type="EMBL" id="AY059828">
    <property type="protein sequence ID" value="AAL24310.1"/>
    <property type="molecule type" value="mRNA"/>
</dbReference>
<dbReference type="EMBL" id="BT002206">
    <property type="protein sequence ID" value="AAN72217.1"/>
    <property type="molecule type" value="mRNA"/>
</dbReference>
<dbReference type="EMBL" id="AY087187">
    <property type="protein sequence ID" value="AAM64743.1"/>
    <property type="molecule type" value="mRNA"/>
</dbReference>
<dbReference type="PIR" id="T47981">
    <property type="entry name" value="T47981"/>
</dbReference>
<dbReference type="PIR" id="T51751">
    <property type="entry name" value="T51751"/>
</dbReference>
<dbReference type="SMR" id="Q9M276"/>
<dbReference type="BioGRID" id="10676">
    <property type="interactions" value="21"/>
</dbReference>
<dbReference type="FunCoup" id="Q9M276">
    <property type="interactions" value="55"/>
</dbReference>
<dbReference type="IntAct" id="Q9M276">
    <property type="interactions" value="1"/>
</dbReference>
<dbReference type="STRING" id="3702.Q9M276"/>
<dbReference type="PaxDb" id="3702-AT3G61890.1"/>
<dbReference type="ProteomicsDB" id="246716"/>
<dbReference type="EnsemblPlants" id="AT3G61890.1">
    <property type="protein sequence ID" value="AT3G61890.1"/>
    <property type="gene ID" value="AT3G61890"/>
</dbReference>
<dbReference type="GeneID" id="825362"/>
<dbReference type="Gramene" id="AT3G61890.1">
    <property type="protein sequence ID" value="AT3G61890.1"/>
    <property type="gene ID" value="AT3G61890"/>
</dbReference>
<dbReference type="KEGG" id="ath:AT3G61890"/>
<dbReference type="Araport" id="AT3G61890"/>
<dbReference type="TAIR" id="AT3G61890">
    <property type="gene designation" value="HB-12"/>
</dbReference>
<dbReference type="eggNOG" id="KOG0483">
    <property type="taxonomic scope" value="Eukaryota"/>
</dbReference>
<dbReference type="HOGENOM" id="CLU_060842_3_0_1"/>
<dbReference type="InParanoid" id="Q9M276"/>
<dbReference type="OMA" id="SPENWGS"/>
<dbReference type="OrthoDB" id="6159439at2759"/>
<dbReference type="PhylomeDB" id="Q9M276"/>
<dbReference type="PRO" id="PR:Q9M276"/>
<dbReference type="Proteomes" id="UP000006548">
    <property type="component" value="Chromosome 3"/>
</dbReference>
<dbReference type="ExpressionAtlas" id="Q9M276">
    <property type="expression patterns" value="baseline and differential"/>
</dbReference>
<dbReference type="GO" id="GO:0005634">
    <property type="term" value="C:nucleus"/>
    <property type="evidence" value="ECO:0000314"/>
    <property type="project" value="TAIR"/>
</dbReference>
<dbReference type="GO" id="GO:0003700">
    <property type="term" value="F:DNA-binding transcription factor activity"/>
    <property type="evidence" value="ECO:0000250"/>
    <property type="project" value="TAIR"/>
</dbReference>
<dbReference type="GO" id="GO:0000981">
    <property type="term" value="F:DNA-binding transcription factor activity, RNA polymerase II-specific"/>
    <property type="evidence" value="ECO:0007669"/>
    <property type="project" value="InterPro"/>
</dbReference>
<dbReference type="GO" id="GO:0000976">
    <property type="term" value="F:transcription cis-regulatory region binding"/>
    <property type="evidence" value="ECO:0000353"/>
    <property type="project" value="TAIR"/>
</dbReference>
<dbReference type="GO" id="GO:0045893">
    <property type="term" value="P:positive regulation of DNA-templated transcription"/>
    <property type="evidence" value="ECO:0000314"/>
    <property type="project" value="TAIR"/>
</dbReference>
<dbReference type="GO" id="GO:0009737">
    <property type="term" value="P:response to abscisic acid"/>
    <property type="evidence" value="ECO:0000315"/>
    <property type="project" value="TAIR"/>
</dbReference>
<dbReference type="GO" id="GO:0006970">
    <property type="term" value="P:response to osmotic stress"/>
    <property type="evidence" value="ECO:0000270"/>
    <property type="project" value="TAIR"/>
</dbReference>
<dbReference type="GO" id="GO:0009615">
    <property type="term" value="P:response to virus"/>
    <property type="evidence" value="ECO:0000270"/>
    <property type="project" value="TAIR"/>
</dbReference>
<dbReference type="GO" id="GO:0009414">
    <property type="term" value="P:response to water deprivation"/>
    <property type="evidence" value="ECO:0000270"/>
    <property type="project" value="TAIR"/>
</dbReference>
<dbReference type="CDD" id="cd00086">
    <property type="entry name" value="homeodomain"/>
    <property type="match status" value="1"/>
</dbReference>
<dbReference type="FunFam" id="1.10.10.60:FF:000293">
    <property type="entry name" value="Homeobox-leucine zipper protein ATHB-7"/>
    <property type="match status" value="1"/>
</dbReference>
<dbReference type="Gene3D" id="1.10.10.60">
    <property type="entry name" value="Homeodomain-like"/>
    <property type="match status" value="1"/>
</dbReference>
<dbReference type="InterPro" id="IPR001356">
    <property type="entry name" value="HD"/>
</dbReference>
<dbReference type="InterPro" id="IPR045224">
    <property type="entry name" value="HDZip_class_I_plant"/>
</dbReference>
<dbReference type="InterPro" id="IPR017970">
    <property type="entry name" value="Homeobox_CS"/>
</dbReference>
<dbReference type="InterPro" id="IPR009057">
    <property type="entry name" value="Homeodomain-like_sf"/>
</dbReference>
<dbReference type="InterPro" id="IPR000047">
    <property type="entry name" value="HTH_motif"/>
</dbReference>
<dbReference type="InterPro" id="IPR003106">
    <property type="entry name" value="Leu_zip_homeo"/>
</dbReference>
<dbReference type="PANTHER" id="PTHR24326">
    <property type="entry name" value="HOMEOBOX-LEUCINE ZIPPER PROTEIN"/>
    <property type="match status" value="1"/>
</dbReference>
<dbReference type="PANTHER" id="PTHR24326:SF564">
    <property type="entry name" value="HOMEOBOX-LEUCINE ZIPPER PROTEIN ATHB-12"/>
    <property type="match status" value="1"/>
</dbReference>
<dbReference type="Pfam" id="PF02183">
    <property type="entry name" value="HALZ"/>
    <property type="match status" value="1"/>
</dbReference>
<dbReference type="Pfam" id="PF00046">
    <property type="entry name" value="Homeodomain"/>
    <property type="match status" value="1"/>
</dbReference>
<dbReference type="PRINTS" id="PR00031">
    <property type="entry name" value="HTHREPRESSR"/>
</dbReference>
<dbReference type="SMART" id="SM00389">
    <property type="entry name" value="HOX"/>
    <property type="match status" value="1"/>
</dbReference>
<dbReference type="SUPFAM" id="SSF46689">
    <property type="entry name" value="Homeodomain-like"/>
    <property type="match status" value="1"/>
</dbReference>
<dbReference type="PROSITE" id="PS00027">
    <property type="entry name" value="HOMEOBOX_1"/>
    <property type="match status" value="1"/>
</dbReference>
<dbReference type="PROSITE" id="PS50071">
    <property type="entry name" value="HOMEOBOX_2"/>
    <property type="match status" value="1"/>
</dbReference>
<feature type="chain" id="PRO_0000257793" description="Homeobox-leucine zipper protein ATHB-12">
    <location>
        <begin position="1"/>
        <end position="235"/>
    </location>
</feature>
<feature type="DNA-binding region" description="Homeobox" evidence="1">
    <location>
        <begin position="27"/>
        <end position="86"/>
    </location>
</feature>
<feature type="region of interest" description="Leucine-zipper">
    <location>
        <begin position="87"/>
        <end position="122"/>
    </location>
</feature>
<feature type="region of interest" description="Disordered" evidence="2">
    <location>
        <begin position="128"/>
        <end position="167"/>
    </location>
</feature>
<feature type="compositionally biased region" description="Basic and acidic residues" evidence="2">
    <location>
        <begin position="128"/>
        <end position="138"/>
    </location>
</feature>
<feature type="compositionally biased region" description="Basic and acidic residues" evidence="2">
    <location>
        <begin position="152"/>
        <end position="162"/>
    </location>
</feature>
<feature type="sequence conflict" description="In Ref. 1; AAC39462." evidence="9" ref="1">
    <original>S</original>
    <variation>N</variation>
    <location>
        <position position="35"/>
    </location>
</feature>
<feature type="sequence conflict" description="In Ref. 1; AAC39462." evidence="9" ref="1">
    <original>VA</original>
    <variation>MT</variation>
    <location>
        <begin position="71"/>
        <end position="72"/>
    </location>
</feature>
<feature type="sequence conflict" description="In Ref. 1; AAC39462." evidence="9" ref="1">
    <original>GFEE</original>
    <variation>RVQG</variation>
    <location>
        <begin position="184"/>
        <end position="187"/>
    </location>
</feature>
<evidence type="ECO:0000255" key="1">
    <source>
        <dbReference type="PROSITE-ProRule" id="PRU00108"/>
    </source>
</evidence>
<evidence type="ECO:0000256" key="2">
    <source>
        <dbReference type="SAM" id="MobiDB-lite"/>
    </source>
</evidence>
<evidence type="ECO:0000269" key="3">
    <source>
    </source>
</evidence>
<evidence type="ECO:0000269" key="4">
    <source>
    </source>
</evidence>
<evidence type="ECO:0000269" key="5">
    <source>
    </source>
</evidence>
<evidence type="ECO:0000269" key="6">
    <source>
    </source>
</evidence>
<evidence type="ECO:0000269" key="7">
    <source>
    </source>
</evidence>
<evidence type="ECO:0000269" key="8">
    <source>
    </source>
</evidence>
<evidence type="ECO:0000305" key="9"/>
<gene>
    <name type="primary">ATHB-12</name>
    <name type="ordered locus">At3g61890</name>
    <name type="ORF">F21F14.60</name>
</gene>